<comment type="similarity">
    <text evidence="3">Belongs to the mycobacterial PE family. PGRS subfamily.</text>
</comment>
<reference key="1">
    <citation type="journal article" date="2002" name="J. Bacteriol.">
        <title>Whole-genome comparison of Mycobacterium tuberculosis clinical and laboratory strains.</title>
        <authorList>
            <person name="Fleischmann R.D."/>
            <person name="Alland D."/>
            <person name="Eisen J.A."/>
            <person name="Carpenter L."/>
            <person name="White O."/>
            <person name="Peterson J.D."/>
            <person name="DeBoy R.T."/>
            <person name="Dodson R.J."/>
            <person name="Gwinn M.L."/>
            <person name="Haft D.H."/>
            <person name="Hickey E.K."/>
            <person name="Kolonay J.F."/>
            <person name="Nelson W.C."/>
            <person name="Umayam L.A."/>
            <person name="Ermolaeva M.D."/>
            <person name="Salzberg S.L."/>
            <person name="Delcher A."/>
            <person name="Utterback T.R."/>
            <person name="Weidman J.F."/>
            <person name="Khouri H.M."/>
            <person name="Gill J."/>
            <person name="Mikula A."/>
            <person name="Bishai W."/>
            <person name="Jacobs W.R. Jr."/>
            <person name="Venter J.C."/>
            <person name="Fraser C.M."/>
        </authorList>
    </citation>
    <scope>NUCLEOTIDE SEQUENCE [LARGE SCALE GENOMIC DNA]</scope>
    <source>
        <strain>CDC 1551 / Oshkosh</strain>
    </source>
</reference>
<gene>
    <name type="primary">PE_PGRS36</name>
    <name type="ordered locus">MT2159</name>
    <name type="ORF">MTCY49.38c</name>
</gene>
<proteinExistence type="inferred from homology"/>
<accession>P0A688</accession>
<accession>Q10707</accession>
<keyword id="KW-1185">Reference proteome</keyword>
<evidence type="ECO:0000255" key="1"/>
<evidence type="ECO:0000256" key="2">
    <source>
        <dbReference type="SAM" id="MobiDB-lite"/>
    </source>
</evidence>
<evidence type="ECO:0000305" key="3"/>
<feature type="chain" id="PRO_0000216168" description="Uncharacterized PE-PGRS family protein PE_PGRS36">
    <location>
        <begin position="1"/>
        <end position="491"/>
    </location>
</feature>
<feature type="domain" description="PE" evidence="1">
    <location>
        <begin position="1"/>
        <end position="92"/>
    </location>
</feature>
<feature type="region of interest" description="Disordered" evidence="2">
    <location>
        <begin position="114"/>
        <end position="156"/>
    </location>
</feature>
<feature type="region of interest" description="Disordered" evidence="2">
    <location>
        <begin position="376"/>
        <end position="400"/>
    </location>
</feature>
<feature type="region of interest" description="Disordered" evidence="2">
    <location>
        <begin position="419"/>
        <end position="491"/>
    </location>
</feature>
<feature type="compositionally biased region" description="Gly residues" evidence="2">
    <location>
        <begin position="128"/>
        <end position="145"/>
    </location>
</feature>
<feature type="compositionally biased region" description="Gly residues" evidence="2">
    <location>
        <begin position="432"/>
        <end position="480"/>
    </location>
</feature>
<sequence>MSFVIASPEALLAAATDLAAIRSTIRAANAAAAVPTTGALAPAADEVSAGIAALFGAQAQSYQAVSAQAAAFHDRFVQLLNAGGGSYASAEIANAQQNLLNAVNAPTQTLLGRPLVGDGADGASGPVGQPGGDGGILWGNGGNGGDSTSPGVAGGAGGSAGLIGNGGRGGNGAPGGAGGNGGLGGLLLGNGGAGGVGGTGDNGVGDLGAGGGGGDGGLGGRAGLIGHGGAGGNGGDGGHGGSGKAGGSGGSGGFGQFGGAGGLLYGNGGAAGSGGNGGDAGTGVSSDGFAGLGGSGGRGGDAGLIGVGGGGGNGGDPGLGARLFQVGSRGGDGGVGGWLYGDGGGGGDGGNGGLPFIGSTNAGNGGSARLIGNGGAGGSGGSGAPGSVSSGGVGGAGNPGGSGGNGGVWYGNGGAGGAAGQGGPGMNTTSPGGPGGVGGHGGTAILFGDGGAGGAGAAGGPGTPDGAAGPGGSGGTGGLLFGVPGPSGPDG</sequence>
<organism>
    <name type="scientific">Mycobacterium tuberculosis (strain CDC 1551 / Oshkosh)</name>
    <dbReference type="NCBI Taxonomy" id="83331"/>
    <lineage>
        <taxon>Bacteria</taxon>
        <taxon>Bacillati</taxon>
        <taxon>Actinomycetota</taxon>
        <taxon>Actinomycetes</taxon>
        <taxon>Mycobacteriales</taxon>
        <taxon>Mycobacteriaceae</taxon>
        <taxon>Mycobacterium</taxon>
        <taxon>Mycobacterium tuberculosis complex</taxon>
    </lineage>
</organism>
<protein>
    <recommendedName>
        <fullName>Uncharacterized PE-PGRS family protein PE_PGRS36</fullName>
    </recommendedName>
</protein>
<name>PG36_MYCTO</name>
<dbReference type="EMBL" id="AE000516">
    <property type="protein sequence ID" value="AAK46440.1"/>
    <property type="molecule type" value="Genomic_DNA"/>
</dbReference>
<dbReference type="RefSeq" id="WP_003410786.1">
    <property type="nucleotide sequence ID" value="NZ_KK341227.1"/>
</dbReference>
<dbReference type="SMR" id="P0A688"/>
<dbReference type="KEGG" id="mtc:MT2159"/>
<dbReference type="HOGENOM" id="CLU_000167_10_3_11"/>
<dbReference type="Proteomes" id="UP000001020">
    <property type="component" value="Chromosome"/>
</dbReference>
<dbReference type="FunFam" id="1.10.287.850:FF:000001">
    <property type="entry name" value="PE_PGRS39"/>
    <property type="match status" value="1"/>
</dbReference>
<dbReference type="Gene3D" id="1.10.287.850">
    <property type="entry name" value="HP0062-like domain"/>
    <property type="match status" value="1"/>
</dbReference>
<dbReference type="InterPro" id="IPR000084">
    <property type="entry name" value="PE-PGRS_N"/>
</dbReference>
<dbReference type="InterPro" id="IPR048996">
    <property type="entry name" value="PGRS_rpt"/>
</dbReference>
<dbReference type="Pfam" id="PF00934">
    <property type="entry name" value="PE"/>
    <property type="match status" value="1"/>
</dbReference>
<dbReference type="Pfam" id="PF21526">
    <property type="entry name" value="PGRS"/>
    <property type="match status" value="1"/>
</dbReference>
<dbReference type="PRINTS" id="PR01228">
    <property type="entry name" value="EGGSHELL"/>
</dbReference>
<dbReference type="SUPFAM" id="SSF140459">
    <property type="entry name" value="PE/PPE dimer-like"/>
    <property type="match status" value="1"/>
</dbReference>